<sequence length="181" mass="19462">MILSHRWQCTIVPVDSGRQRRAYPEGVTENLNTIDSIRLLRLDPGLPMPRRAHRGDAGVDLHSTTDVVIAPGHRELVGTGVAIALPLGTVGLIHPRSGLAAREGLSIVNAPGTVDADYRGEIKVCLINLDPSTPITITRGDRIAQLIIQRVELVDFVEVDELDETTRGDQGHGSTGRGSTA</sequence>
<proteinExistence type="inferred from homology"/>
<reference key="1">
    <citation type="journal article" date="2003" name="Genome Res.">
        <title>Comparative complete genome sequence analysis of the amino acid replacements responsible for the thermostability of Corynebacterium efficiens.</title>
        <authorList>
            <person name="Nishio Y."/>
            <person name="Nakamura Y."/>
            <person name="Kawarabayasi Y."/>
            <person name="Usuda Y."/>
            <person name="Kimura E."/>
            <person name="Sugimoto S."/>
            <person name="Matsui K."/>
            <person name="Yamagishi A."/>
            <person name="Kikuchi H."/>
            <person name="Ikeo K."/>
            <person name="Gojobori T."/>
        </authorList>
    </citation>
    <scope>NUCLEOTIDE SEQUENCE [LARGE SCALE GENOMIC DNA]</scope>
    <source>
        <strain>DSM 44549 / YS-314 / AJ 12310 / JCM 11189 / NBRC 100395</strain>
    </source>
</reference>
<protein>
    <recommendedName>
        <fullName evidence="1">Deoxyuridine 5'-triphosphate nucleotidohydrolase</fullName>
        <shortName evidence="1">dUTPase</shortName>
        <ecNumber evidence="1">3.6.1.23</ecNumber>
    </recommendedName>
    <alternativeName>
        <fullName evidence="1">dUTP pyrophosphatase</fullName>
    </alternativeName>
</protein>
<feature type="chain" id="PRO_0000182854" description="Deoxyuridine 5'-triphosphate nucleotidohydrolase">
    <location>
        <begin position="1"/>
        <end position="181"/>
    </location>
</feature>
<feature type="binding site" evidence="1">
    <location>
        <begin position="96"/>
        <end position="98"/>
    </location>
    <ligand>
        <name>substrate</name>
    </ligand>
</feature>
<feature type="binding site" evidence="1">
    <location>
        <position position="109"/>
    </location>
    <ligand>
        <name>substrate</name>
    </ligand>
</feature>
<feature type="binding site" evidence="1">
    <location>
        <begin position="113"/>
        <end position="115"/>
    </location>
    <ligand>
        <name>substrate</name>
    </ligand>
</feature>
<feature type="binding site" evidence="1">
    <location>
        <position position="123"/>
    </location>
    <ligand>
        <name>substrate</name>
    </ligand>
</feature>
<name>DUT_COREF</name>
<evidence type="ECO:0000255" key="1">
    <source>
        <dbReference type="HAMAP-Rule" id="MF_00116"/>
    </source>
</evidence>
<comment type="function">
    <text evidence="1">This enzyme is involved in nucleotide metabolism: it produces dUMP, the immediate precursor of thymidine nucleotides and it decreases the intracellular concentration of dUTP so that uracil cannot be incorporated into DNA.</text>
</comment>
<comment type="catalytic activity">
    <reaction evidence="1">
        <text>dUTP + H2O = dUMP + diphosphate + H(+)</text>
        <dbReference type="Rhea" id="RHEA:10248"/>
        <dbReference type="ChEBI" id="CHEBI:15377"/>
        <dbReference type="ChEBI" id="CHEBI:15378"/>
        <dbReference type="ChEBI" id="CHEBI:33019"/>
        <dbReference type="ChEBI" id="CHEBI:61555"/>
        <dbReference type="ChEBI" id="CHEBI:246422"/>
        <dbReference type="EC" id="3.6.1.23"/>
    </reaction>
</comment>
<comment type="cofactor">
    <cofactor evidence="1">
        <name>Mg(2+)</name>
        <dbReference type="ChEBI" id="CHEBI:18420"/>
    </cofactor>
</comment>
<comment type="pathway">
    <text evidence="1">Pyrimidine metabolism; dUMP biosynthesis; dUMP from dCTP (dUTP route): step 2/2.</text>
</comment>
<comment type="similarity">
    <text evidence="1">Belongs to the dUTPase family.</text>
</comment>
<dbReference type="EC" id="3.6.1.23" evidence="1"/>
<dbReference type="EMBL" id="BA000035">
    <property type="protein sequence ID" value="BAC18609.1"/>
    <property type="molecule type" value="Genomic_DNA"/>
</dbReference>
<dbReference type="SMR" id="Q8FPH9"/>
<dbReference type="STRING" id="196164.gene:10742227"/>
<dbReference type="KEGG" id="cef:CE1799"/>
<dbReference type="eggNOG" id="COG0756">
    <property type="taxonomic scope" value="Bacteria"/>
</dbReference>
<dbReference type="HOGENOM" id="CLU_068508_1_3_11"/>
<dbReference type="UniPathway" id="UPA00610">
    <property type="reaction ID" value="UER00666"/>
</dbReference>
<dbReference type="Proteomes" id="UP000001409">
    <property type="component" value="Chromosome"/>
</dbReference>
<dbReference type="GO" id="GO:0004170">
    <property type="term" value="F:dUTP diphosphatase activity"/>
    <property type="evidence" value="ECO:0007669"/>
    <property type="project" value="UniProtKB-UniRule"/>
</dbReference>
<dbReference type="GO" id="GO:0000287">
    <property type="term" value="F:magnesium ion binding"/>
    <property type="evidence" value="ECO:0007669"/>
    <property type="project" value="UniProtKB-UniRule"/>
</dbReference>
<dbReference type="GO" id="GO:0006226">
    <property type="term" value="P:dUMP biosynthetic process"/>
    <property type="evidence" value="ECO:0007669"/>
    <property type="project" value="UniProtKB-UniRule"/>
</dbReference>
<dbReference type="GO" id="GO:0046081">
    <property type="term" value="P:dUTP catabolic process"/>
    <property type="evidence" value="ECO:0007669"/>
    <property type="project" value="InterPro"/>
</dbReference>
<dbReference type="CDD" id="cd07557">
    <property type="entry name" value="trimeric_dUTPase"/>
    <property type="match status" value="1"/>
</dbReference>
<dbReference type="FunFam" id="2.70.40.10:FF:000008">
    <property type="entry name" value="Deoxyuridine 5'-triphosphate nucleotidohydrolase"/>
    <property type="match status" value="1"/>
</dbReference>
<dbReference type="Gene3D" id="2.70.40.10">
    <property type="match status" value="1"/>
</dbReference>
<dbReference type="HAMAP" id="MF_00116">
    <property type="entry name" value="dUTPase_bact"/>
    <property type="match status" value="1"/>
</dbReference>
<dbReference type="InterPro" id="IPR008181">
    <property type="entry name" value="dUTPase"/>
</dbReference>
<dbReference type="InterPro" id="IPR029054">
    <property type="entry name" value="dUTPase-like"/>
</dbReference>
<dbReference type="InterPro" id="IPR036157">
    <property type="entry name" value="dUTPase-like_sf"/>
</dbReference>
<dbReference type="InterPro" id="IPR033704">
    <property type="entry name" value="dUTPase_trimeric"/>
</dbReference>
<dbReference type="NCBIfam" id="TIGR00576">
    <property type="entry name" value="dut"/>
    <property type="match status" value="1"/>
</dbReference>
<dbReference type="NCBIfam" id="NF001862">
    <property type="entry name" value="PRK00601.1"/>
    <property type="match status" value="1"/>
</dbReference>
<dbReference type="PANTHER" id="PTHR11241">
    <property type="entry name" value="DEOXYURIDINE 5'-TRIPHOSPHATE NUCLEOTIDOHYDROLASE"/>
    <property type="match status" value="1"/>
</dbReference>
<dbReference type="PANTHER" id="PTHR11241:SF0">
    <property type="entry name" value="DEOXYURIDINE 5'-TRIPHOSPHATE NUCLEOTIDOHYDROLASE"/>
    <property type="match status" value="1"/>
</dbReference>
<dbReference type="Pfam" id="PF00692">
    <property type="entry name" value="dUTPase"/>
    <property type="match status" value="1"/>
</dbReference>
<dbReference type="SUPFAM" id="SSF51283">
    <property type="entry name" value="dUTPase-like"/>
    <property type="match status" value="1"/>
</dbReference>
<keyword id="KW-0378">Hydrolase</keyword>
<keyword id="KW-0460">Magnesium</keyword>
<keyword id="KW-0479">Metal-binding</keyword>
<keyword id="KW-0546">Nucleotide metabolism</keyword>
<keyword id="KW-1185">Reference proteome</keyword>
<accession>Q8FPH9</accession>
<gene>
    <name evidence="1" type="primary">dut</name>
    <name type="ordered locus">CE1799</name>
</gene>
<organism>
    <name type="scientific">Corynebacterium efficiens (strain DSM 44549 / YS-314 / AJ 12310 / JCM 11189 / NBRC 100395)</name>
    <dbReference type="NCBI Taxonomy" id="196164"/>
    <lineage>
        <taxon>Bacteria</taxon>
        <taxon>Bacillati</taxon>
        <taxon>Actinomycetota</taxon>
        <taxon>Actinomycetes</taxon>
        <taxon>Mycobacteriales</taxon>
        <taxon>Corynebacteriaceae</taxon>
        <taxon>Corynebacterium</taxon>
    </lineage>
</organism>